<proteinExistence type="inferred from homology"/>
<evidence type="ECO:0000255" key="1">
    <source>
        <dbReference type="HAMAP-Rule" id="MF_01815"/>
    </source>
</evidence>
<protein>
    <recommendedName>
        <fullName evidence="1">Beta-ketoacyl-[acyl-carrier-protein] synthase III</fullName>
        <shortName evidence="1">Beta-ketoacyl-ACP synthase III</shortName>
        <shortName evidence="1">KAS III</shortName>
        <ecNumber evidence="1">2.3.1.180</ecNumber>
    </recommendedName>
    <alternativeName>
        <fullName evidence="1">3-oxoacyl-[acyl-carrier-protein] synthase 3</fullName>
    </alternativeName>
    <alternativeName>
        <fullName evidence="1">3-oxoacyl-[acyl-carrier-protein] synthase III</fullName>
    </alternativeName>
</protein>
<sequence length="340" mass="36666">MSQTKPVYASFRSIGAYVPSKILSNADLEKMVDTTDEWIVKRTGIKERHIAADDEYTSDMGAKAAKLAIERAGIEKEDIDLVLCATVTPDYFNMPSTACIISDKLGIRNVQAFDISAACSGFVYLLTVAKAFIESGMKKNVLIIGAEKFSSVVDYTDRSTCILFGDGAGAAIISATDKKEEGFIDVHASADGSYADFLVTPAPGAINPASQKVIDEGLNFVQMKGNETFKLAVKTLTKDVKEILAKNKIDSGDIPHFIPHQANYRIIKAVGDALKMREDQVVLTVGKYGNTSAASIPMAINEIWESGRLKTGDLMLLDTFGGGLTWASALLPFAGESVQR</sequence>
<comment type="function">
    <text evidence="1">Catalyzes the condensation reaction of fatty acid synthesis by the addition to an acyl acceptor of two carbons from malonyl-ACP. Catalyzes the first condensation reaction which initiates fatty acid synthesis and may therefore play a role in governing the total rate of fatty acid production. Possesses both acetoacetyl-ACP synthase and acetyl transacylase activities. Its substrate specificity determines the biosynthesis of branched-chain and/or straight-chain of fatty acids.</text>
</comment>
<comment type="catalytic activity">
    <reaction evidence="1">
        <text>malonyl-[ACP] + acetyl-CoA + H(+) = 3-oxobutanoyl-[ACP] + CO2 + CoA</text>
        <dbReference type="Rhea" id="RHEA:12080"/>
        <dbReference type="Rhea" id="RHEA-COMP:9623"/>
        <dbReference type="Rhea" id="RHEA-COMP:9625"/>
        <dbReference type="ChEBI" id="CHEBI:15378"/>
        <dbReference type="ChEBI" id="CHEBI:16526"/>
        <dbReference type="ChEBI" id="CHEBI:57287"/>
        <dbReference type="ChEBI" id="CHEBI:57288"/>
        <dbReference type="ChEBI" id="CHEBI:78449"/>
        <dbReference type="ChEBI" id="CHEBI:78450"/>
        <dbReference type="EC" id="2.3.1.180"/>
    </reaction>
</comment>
<comment type="pathway">
    <text evidence="1">Lipid metabolism; fatty acid biosynthesis.</text>
</comment>
<comment type="subunit">
    <text evidence="1">Homodimer.</text>
</comment>
<comment type="subcellular location">
    <subcellularLocation>
        <location evidence="1">Cytoplasm</location>
    </subcellularLocation>
</comment>
<comment type="domain">
    <text evidence="1">The last Arg residue of the ACP-binding site is essential for the weak association between ACP/AcpP and FabH.</text>
</comment>
<comment type="similarity">
    <text evidence="1">Belongs to the thiolase-like superfamily. FabH family.</text>
</comment>
<dbReference type="EC" id="2.3.1.180" evidence="1"/>
<dbReference type="EMBL" id="AP009179">
    <property type="protein sequence ID" value="BAF72989.1"/>
    <property type="molecule type" value="Genomic_DNA"/>
</dbReference>
<dbReference type="RefSeq" id="WP_012083810.1">
    <property type="nucleotide sequence ID" value="NC_009663.1"/>
</dbReference>
<dbReference type="SMR" id="A6QBY0"/>
<dbReference type="STRING" id="387093.SUN_2048"/>
<dbReference type="KEGG" id="sun:SUN_2048"/>
<dbReference type="eggNOG" id="COG0332">
    <property type="taxonomic scope" value="Bacteria"/>
</dbReference>
<dbReference type="HOGENOM" id="CLU_039592_4_1_7"/>
<dbReference type="OrthoDB" id="9815506at2"/>
<dbReference type="UniPathway" id="UPA00094"/>
<dbReference type="Proteomes" id="UP000006378">
    <property type="component" value="Chromosome"/>
</dbReference>
<dbReference type="GO" id="GO:0005737">
    <property type="term" value="C:cytoplasm"/>
    <property type="evidence" value="ECO:0007669"/>
    <property type="project" value="UniProtKB-SubCell"/>
</dbReference>
<dbReference type="GO" id="GO:0004315">
    <property type="term" value="F:3-oxoacyl-[acyl-carrier-protein] synthase activity"/>
    <property type="evidence" value="ECO:0007669"/>
    <property type="project" value="InterPro"/>
</dbReference>
<dbReference type="GO" id="GO:0033818">
    <property type="term" value="F:beta-ketoacyl-acyl-carrier-protein synthase III activity"/>
    <property type="evidence" value="ECO:0007669"/>
    <property type="project" value="UniProtKB-UniRule"/>
</dbReference>
<dbReference type="GO" id="GO:0006633">
    <property type="term" value="P:fatty acid biosynthetic process"/>
    <property type="evidence" value="ECO:0007669"/>
    <property type="project" value="UniProtKB-UniRule"/>
</dbReference>
<dbReference type="GO" id="GO:0044550">
    <property type="term" value="P:secondary metabolite biosynthetic process"/>
    <property type="evidence" value="ECO:0007669"/>
    <property type="project" value="TreeGrafter"/>
</dbReference>
<dbReference type="CDD" id="cd00830">
    <property type="entry name" value="KAS_III"/>
    <property type="match status" value="1"/>
</dbReference>
<dbReference type="FunFam" id="3.40.47.10:FF:000004">
    <property type="entry name" value="3-oxoacyl-[acyl-carrier-protein] synthase 3"/>
    <property type="match status" value="1"/>
</dbReference>
<dbReference type="Gene3D" id="3.40.47.10">
    <property type="match status" value="1"/>
</dbReference>
<dbReference type="HAMAP" id="MF_01815">
    <property type="entry name" value="FabH"/>
    <property type="match status" value="1"/>
</dbReference>
<dbReference type="InterPro" id="IPR013747">
    <property type="entry name" value="ACP_syn_III_C"/>
</dbReference>
<dbReference type="InterPro" id="IPR013751">
    <property type="entry name" value="ACP_syn_III_N"/>
</dbReference>
<dbReference type="InterPro" id="IPR004655">
    <property type="entry name" value="FabH"/>
</dbReference>
<dbReference type="InterPro" id="IPR016039">
    <property type="entry name" value="Thiolase-like"/>
</dbReference>
<dbReference type="NCBIfam" id="TIGR00747">
    <property type="entry name" value="fabH"/>
    <property type="match status" value="1"/>
</dbReference>
<dbReference type="NCBIfam" id="NF006829">
    <property type="entry name" value="PRK09352.1"/>
    <property type="match status" value="1"/>
</dbReference>
<dbReference type="PANTHER" id="PTHR34069">
    <property type="entry name" value="3-OXOACYL-[ACYL-CARRIER-PROTEIN] SYNTHASE 3"/>
    <property type="match status" value="1"/>
</dbReference>
<dbReference type="PANTHER" id="PTHR34069:SF2">
    <property type="entry name" value="BETA-KETOACYL-[ACYL-CARRIER-PROTEIN] SYNTHASE III"/>
    <property type="match status" value="1"/>
</dbReference>
<dbReference type="Pfam" id="PF08545">
    <property type="entry name" value="ACP_syn_III"/>
    <property type="match status" value="1"/>
</dbReference>
<dbReference type="Pfam" id="PF08541">
    <property type="entry name" value="ACP_syn_III_C"/>
    <property type="match status" value="1"/>
</dbReference>
<dbReference type="SUPFAM" id="SSF53901">
    <property type="entry name" value="Thiolase-like"/>
    <property type="match status" value="1"/>
</dbReference>
<name>FABH_SULNB</name>
<feature type="chain" id="PRO_1000187907" description="Beta-ketoacyl-[acyl-carrier-protein] synthase III">
    <location>
        <begin position="1"/>
        <end position="340"/>
    </location>
</feature>
<feature type="region of interest" description="ACP-binding" evidence="1">
    <location>
        <begin position="261"/>
        <end position="265"/>
    </location>
</feature>
<feature type="active site" evidence="1">
    <location>
        <position position="119"/>
    </location>
</feature>
<feature type="active site" evidence="1">
    <location>
        <position position="260"/>
    </location>
</feature>
<feature type="active site" evidence="1">
    <location>
        <position position="290"/>
    </location>
</feature>
<accession>A6QBY0</accession>
<organism>
    <name type="scientific">Sulfurovum sp. (strain NBC37-1)</name>
    <dbReference type="NCBI Taxonomy" id="387093"/>
    <lineage>
        <taxon>Bacteria</taxon>
        <taxon>Pseudomonadati</taxon>
        <taxon>Campylobacterota</taxon>
        <taxon>Epsilonproteobacteria</taxon>
        <taxon>Campylobacterales</taxon>
        <taxon>Sulfurovaceae</taxon>
        <taxon>Sulfurovum</taxon>
    </lineage>
</organism>
<reference key="1">
    <citation type="journal article" date="2007" name="Proc. Natl. Acad. Sci. U.S.A.">
        <title>Deep-sea vent epsilon-proteobacterial genomes provide insights into emergence of pathogens.</title>
        <authorList>
            <person name="Nakagawa S."/>
            <person name="Takaki Y."/>
            <person name="Shimamura S."/>
            <person name="Reysenbach A.-L."/>
            <person name="Takai K."/>
            <person name="Horikoshi K."/>
        </authorList>
    </citation>
    <scope>NUCLEOTIDE SEQUENCE [LARGE SCALE GENOMIC DNA]</scope>
    <source>
        <strain>NBC37-1</strain>
    </source>
</reference>
<gene>
    <name evidence="1" type="primary">fabH</name>
    <name type="ordered locus">SUN_2048</name>
</gene>
<keyword id="KW-0012">Acyltransferase</keyword>
<keyword id="KW-0963">Cytoplasm</keyword>
<keyword id="KW-0275">Fatty acid biosynthesis</keyword>
<keyword id="KW-0276">Fatty acid metabolism</keyword>
<keyword id="KW-0444">Lipid biosynthesis</keyword>
<keyword id="KW-0443">Lipid metabolism</keyword>
<keyword id="KW-0511">Multifunctional enzyme</keyword>
<keyword id="KW-0808">Transferase</keyword>